<protein>
    <recommendedName>
        <fullName>Nuclear envelope phosphatase-regulatory subunit 1</fullName>
    </recommendedName>
    <alternativeName>
        <fullName>Transmembrane protein 188</fullName>
    </alternativeName>
</protein>
<organism>
    <name type="scientific">Danio rerio</name>
    <name type="common">Zebrafish</name>
    <name type="synonym">Brachydanio rerio</name>
    <dbReference type="NCBI Taxonomy" id="7955"/>
    <lineage>
        <taxon>Eukaryota</taxon>
        <taxon>Metazoa</taxon>
        <taxon>Chordata</taxon>
        <taxon>Craniata</taxon>
        <taxon>Vertebrata</taxon>
        <taxon>Euteleostomi</taxon>
        <taxon>Actinopterygii</taxon>
        <taxon>Neopterygii</taxon>
        <taxon>Teleostei</taxon>
        <taxon>Ostariophysi</taxon>
        <taxon>Cypriniformes</taxon>
        <taxon>Danionidae</taxon>
        <taxon>Danioninae</taxon>
        <taxon>Danio</taxon>
    </lineage>
</organism>
<dbReference type="EMBL" id="BC092973">
    <property type="protein sequence ID" value="AAH92973.1"/>
    <property type="molecule type" value="mRNA"/>
</dbReference>
<dbReference type="RefSeq" id="NP_001017874.1">
    <property type="nucleotide sequence ID" value="NM_001017874.1"/>
</dbReference>
<dbReference type="FunCoup" id="Q561X0">
    <property type="interactions" value="891"/>
</dbReference>
<dbReference type="STRING" id="7955.ENSDARP00000052350"/>
<dbReference type="PaxDb" id="7955-ENSDARP00000052350"/>
<dbReference type="Ensembl" id="ENSDART00000052351">
    <property type="protein sequence ID" value="ENSDARP00000052350"/>
    <property type="gene ID" value="ENSDARG00000036064"/>
</dbReference>
<dbReference type="GeneID" id="550572"/>
<dbReference type="KEGG" id="dre:550572"/>
<dbReference type="AGR" id="ZFIN:ZDB-GENE-050417-425"/>
<dbReference type="CTD" id="255919"/>
<dbReference type="ZFIN" id="ZDB-GENE-050417-425">
    <property type="gene designation" value="cnep1r1"/>
</dbReference>
<dbReference type="eggNOG" id="KOG4606">
    <property type="taxonomic scope" value="Eukaryota"/>
</dbReference>
<dbReference type="HOGENOM" id="CLU_138149_1_0_1"/>
<dbReference type="InParanoid" id="Q561X0"/>
<dbReference type="OMA" id="NHPFFAI"/>
<dbReference type="OrthoDB" id="5786980at2759"/>
<dbReference type="PhylomeDB" id="Q561X0"/>
<dbReference type="TreeFam" id="TF313179"/>
<dbReference type="PRO" id="PR:Q561X0"/>
<dbReference type="Proteomes" id="UP000000437">
    <property type="component" value="Chromosome 7"/>
</dbReference>
<dbReference type="Bgee" id="ENSDARG00000036064">
    <property type="expression patterns" value="Expressed in mature ovarian follicle and 21 other cell types or tissues"/>
</dbReference>
<dbReference type="ExpressionAtlas" id="Q561X0">
    <property type="expression patterns" value="baseline"/>
</dbReference>
<dbReference type="GO" id="GO:0005737">
    <property type="term" value="C:cytoplasm"/>
    <property type="evidence" value="ECO:0000250"/>
    <property type="project" value="UniProtKB"/>
</dbReference>
<dbReference type="GO" id="GO:0071595">
    <property type="term" value="C:Nem1-Spo7 phosphatase complex"/>
    <property type="evidence" value="ECO:0000250"/>
    <property type="project" value="UniProtKB"/>
</dbReference>
<dbReference type="GO" id="GO:0031965">
    <property type="term" value="C:nuclear membrane"/>
    <property type="evidence" value="ECO:0000250"/>
    <property type="project" value="UniProtKB"/>
</dbReference>
<dbReference type="GO" id="GO:0019888">
    <property type="term" value="F:protein phosphatase regulator activity"/>
    <property type="evidence" value="ECO:0000250"/>
    <property type="project" value="UniProtKB"/>
</dbReference>
<dbReference type="GO" id="GO:0006629">
    <property type="term" value="P:lipid metabolic process"/>
    <property type="evidence" value="ECO:0007669"/>
    <property type="project" value="UniProtKB-KW"/>
</dbReference>
<dbReference type="GO" id="GO:0010867">
    <property type="term" value="P:positive regulation of triglyceride biosynthetic process"/>
    <property type="evidence" value="ECO:0000250"/>
    <property type="project" value="UniProtKB"/>
</dbReference>
<dbReference type="InterPro" id="IPR019168">
    <property type="entry name" value="NEP1-R1"/>
</dbReference>
<dbReference type="PANTHER" id="PTHR20996">
    <property type="entry name" value="NUCLEAR ENVELOPE PHOSPHATASE-REGULATORY SUBUNIT 1"/>
    <property type="match status" value="1"/>
</dbReference>
<dbReference type="PANTHER" id="PTHR20996:SF1">
    <property type="entry name" value="NUCLEAR ENVELOPE PHOSPHATASE-REGULATORY SUBUNIT 1"/>
    <property type="match status" value="1"/>
</dbReference>
<dbReference type="Pfam" id="PF09771">
    <property type="entry name" value="Tmemb_18A"/>
    <property type="match status" value="1"/>
</dbReference>
<name>NEPR1_DANRE</name>
<feature type="chain" id="PRO_0000286618" description="Nuclear envelope phosphatase-regulatory subunit 1">
    <location>
        <begin position="1"/>
        <end position="125"/>
    </location>
</feature>
<feature type="transmembrane region" description="Helical" evidence="2">
    <location>
        <begin position="33"/>
        <end position="53"/>
    </location>
</feature>
<feature type="transmembrane region" description="Helical" evidence="2">
    <location>
        <begin position="65"/>
        <end position="85"/>
    </location>
</feature>
<reference key="1">
    <citation type="submission" date="2005-04" db="EMBL/GenBank/DDBJ databases">
        <authorList>
            <consortium name="NIH - Zebrafish Gene Collection (ZGC) project"/>
        </authorList>
    </citation>
    <scope>NUCLEOTIDE SEQUENCE [LARGE SCALE MRNA]</scope>
    <source>
        <tissue>Embryo</tissue>
    </source>
</reference>
<gene>
    <name type="primary">cnep1r1</name>
    <name type="synonym">tmem188</name>
    <name type="ORF">zgc:110674</name>
</gene>
<proteinExistence type="evidence at transcript level"/>
<accession>Q561X0</accession>
<evidence type="ECO:0000250" key="1"/>
<evidence type="ECO:0000255" key="2"/>
<evidence type="ECO:0000305" key="3"/>
<sequence length="125" mass="14175">MNSLEQAEDLKAFERRLTEYVSCLQPATGRWRMILIVVSVCTATGAWNWLIDPDTQKVSFFSSLWNHPFFTISCVTLIGLFFAGIHKRVVAPSIIAARCRTVLAEYNMSCDDTGKLILKPRPHIQ</sequence>
<comment type="function">
    <text evidence="1">May form with the serine/threonine protein phosphatase ctdnep1 an active complex dephosphorylating and activating lipins. Lipins are phosphatidate phosphatases that catalyze the conversion of phosphatidic acid to diacylglycerol and control the metabolism of fatty acids at different levels. May indirectly modulate the lipid composition of nuclear and/or endoplasmic reticulum membranes and be required for proper nuclear membrane morphology and/or dynamics. May also indirectly regulate the production of lipid droplets and triacylglycerol (By similarity).</text>
</comment>
<comment type="subcellular location">
    <subcellularLocation>
        <location evidence="1">Nucleus membrane</location>
        <topology evidence="1">Multi-pass membrane protein</topology>
    </subcellularLocation>
    <subcellularLocation>
        <location evidence="1">Cytoplasm</location>
    </subcellularLocation>
</comment>
<comment type="similarity">
    <text evidence="3">Belongs to the CNEP1R1 family.</text>
</comment>
<keyword id="KW-0963">Cytoplasm</keyword>
<keyword id="KW-0443">Lipid metabolism</keyword>
<keyword id="KW-0472">Membrane</keyword>
<keyword id="KW-0539">Nucleus</keyword>
<keyword id="KW-1185">Reference proteome</keyword>
<keyword id="KW-0812">Transmembrane</keyword>
<keyword id="KW-1133">Transmembrane helix</keyword>